<proteinExistence type="evidence at transcript level"/>
<accession>P52599</accession>
<accession>P76517</accession>
<accession>P76944</accession>
<accession>P76945</accession>
<keyword id="KW-0997">Cell inner membrane</keyword>
<keyword id="KW-1003">Cell membrane</keyword>
<keyword id="KW-0472">Membrane</keyword>
<keyword id="KW-1185">Reference proteome</keyword>
<keyword id="KW-0812">Transmembrane</keyword>
<keyword id="KW-1133">Transmembrane helix</keyword>
<keyword id="KW-0813">Transport</keyword>
<dbReference type="EMBL" id="D78168">
    <property type="protein sequence ID" value="BAA11236.1"/>
    <property type="status" value="ALT_INIT"/>
    <property type="molecule type" value="Genomic_DNA"/>
</dbReference>
<dbReference type="EMBL" id="U00096">
    <property type="protein sequence ID" value="AAC75427.1"/>
    <property type="molecule type" value="Genomic_DNA"/>
</dbReference>
<dbReference type="EMBL" id="AP009048">
    <property type="protein sequence ID" value="BAA16239.2"/>
    <property type="molecule type" value="Genomic_DNA"/>
</dbReference>
<dbReference type="PIR" id="E65010">
    <property type="entry name" value="E65010"/>
</dbReference>
<dbReference type="RefSeq" id="NP_416869.1">
    <property type="nucleotide sequence ID" value="NC_000913.3"/>
</dbReference>
<dbReference type="RefSeq" id="WP_000435167.1">
    <property type="nucleotide sequence ID" value="NZ_SSZK01000006.1"/>
</dbReference>
<dbReference type="SMR" id="P52599"/>
<dbReference type="BioGRID" id="4260557">
    <property type="interactions" value="148"/>
</dbReference>
<dbReference type="ComplexPortal" id="CPX-4273">
    <property type="entry name" value="EmrKY-TolC multidrug efflux transport system"/>
</dbReference>
<dbReference type="FunCoup" id="P52599">
    <property type="interactions" value="194"/>
</dbReference>
<dbReference type="STRING" id="511145.b2368"/>
<dbReference type="CARD" id="ARO:3000206">
    <property type="molecule name" value="emrK"/>
    <property type="mechanism identifier" value="ARO:0010000"/>
    <property type="mechanism name" value="antibiotic efflux"/>
</dbReference>
<dbReference type="PaxDb" id="511145-b2368"/>
<dbReference type="EnsemblBacteria" id="AAC75427">
    <property type="protein sequence ID" value="AAC75427"/>
    <property type="gene ID" value="b2368"/>
</dbReference>
<dbReference type="GeneID" id="946840"/>
<dbReference type="KEGG" id="ecj:JW2365"/>
<dbReference type="KEGG" id="eco:b2368"/>
<dbReference type="KEGG" id="ecoc:C3026_13170"/>
<dbReference type="PATRIC" id="fig|1411691.4.peg.4361"/>
<dbReference type="EchoBASE" id="EB3067"/>
<dbReference type="eggNOG" id="COG1566">
    <property type="taxonomic scope" value="Bacteria"/>
</dbReference>
<dbReference type="HOGENOM" id="CLU_018816_15_0_6"/>
<dbReference type="InParanoid" id="P52599"/>
<dbReference type="OMA" id="YKHHPFT"/>
<dbReference type="OrthoDB" id="9811754at2"/>
<dbReference type="PhylomeDB" id="P52599"/>
<dbReference type="BioCyc" id="EcoCyc:G7233-MONOMER"/>
<dbReference type="BioCyc" id="MetaCyc:G7233-MONOMER"/>
<dbReference type="PRO" id="PR:P52599"/>
<dbReference type="Proteomes" id="UP000000625">
    <property type="component" value="Chromosome"/>
</dbReference>
<dbReference type="GO" id="GO:1990281">
    <property type="term" value="C:efflux pump complex"/>
    <property type="evidence" value="ECO:0000303"/>
    <property type="project" value="ComplexPortal"/>
</dbReference>
<dbReference type="GO" id="GO:0098567">
    <property type="term" value="C:periplasmic side of plasma membrane"/>
    <property type="evidence" value="ECO:0000303"/>
    <property type="project" value="ComplexPortal"/>
</dbReference>
<dbReference type="GO" id="GO:0005886">
    <property type="term" value="C:plasma membrane"/>
    <property type="evidence" value="ECO:0000318"/>
    <property type="project" value="GO_Central"/>
</dbReference>
<dbReference type="GO" id="GO:0015125">
    <property type="term" value="F:bile acid transmembrane transporter activity"/>
    <property type="evidence" value="ECO:0000318"/>
    <property type="project" value="GO_Central"/>
</dbReference>
<dbReference type="GO" id="GO:0042910">
    <property type="term" value="F:xenobiotic transmembrane transporter activity"/>
    <property type="evidence" value="ECO:0007669"/>
    <property type="project" value="InterPro"/>
</dbReference>
<dbReference type="GO" id="GO:0015721">
    <property type="term" value="P:bile acid and bile salt transport"/>
    <property type="evidence" value="ECO:0000315"/>
    <property type="project" value="EcoCyc"/>
</dbReference>
<dbReference type="GO" id="GO:0006974">
    <property type="term" value="P:DNA damage response"/>
    <property type="evidence" value="ECO:0000315"/>
    <property type="project" value="EcoCyc"/>
</dbReference>
<dbReference type="GO" id="GO:0046677">
    <property type="term" value="P:response to antibiotic"/>
    <property type="evidence" value="ECO:0000315"/>
    <property type="project" value="EcoCyc"/>
</dbReference>
<dbReference type="GO" id="GO:0140330">
    <property type="term" value="P:xenobiotic detoxification by transmembrane export across the cell outer membrane"/>
    <property type="evidence" value="ECO:0000303"/>
    <property type="project" value="ComplexPortal"/>
</dbReference>
<dbReference type="GO" id="GO:1990961">
    <property type="term" value="P:xenobiotic detoxification by transmembrane export across the plasma membrane"/>
    <property type="evidence" value="ECO:0000314"/>
    <property type="project" value="EcoCyc"/>
</dbReference>
<dbReference type="FunFam" id="2.40.30.170:FF:000003">
    <property type="entry name" value="Multidrug resistance protein A"/>
    <property type="match status" value="1"/>
</dbReference>
<dbReference type="Gene3D" id="2.40.30.170">
    <property type="match status" value="1"/>
</dbReference>
<dbReference type="Gene3D" id="2.40.50.100">
    <property type="match status" value="1"/>
</dbReference>
<dbReference type="Gene3D" id="1.10.287.470">
    <property type="entry name" value="Helix hairpin bin"/>
    <property type="match status" value="1"/>
</dbReference>
<dbReference type="InterPro" id="IPR043602">
    <property type="entry name" value="CusB-like_dom_1"/>
</dbReference>
<dbReference type="InterPro" id="IPR032317">
    <property type="entry name" value="CusB_D23"/>
</dbReference>
<dbReference type="InterPro" id="IPR050739">
    <property type="entry name" value="MFP"/>
</dbReference>
<dbReference type="InterPro" id="IPR005694">
    <property type="entry name" value="MFP_proteobact"/>
</dbReference>
<dbReference type="NCBIfam" id="TIGR00998">
    <property type="entry name" value="8a0101"/>
    <property type="match status" value="1"/>
</dbReference>
<dbReference type="PANTHER" id="PTHR30386">
    <property type="entry name" value="MEMBRANE FUSION SUBUNIT OF EMRAB-TOLC MULTIDRUG EFFLUX PUMP"/>
    <property type="match status" value="1"/>
</dbReference>
<dbReference type="PANTHER" id="PTHR30386:SF19">
    <property type="entry name" value="MULTIDRUG EXPORT PROTEIN EMRA-RELATED"/>
    <property type="match status" value="1"/>
</dbReference>
<dbReference type="Pfam" id="PF00529">
    <property type="entry name" value="CusB_dom_1"/>
    <property type="match status" value="1"/>
</dbReference>
<dbReference type="Pfam" id="PF16576">
    <property type="entry name" value="HlyD_D23"/>
    <property type="match status" value="1"/>
</dbReference>
<dbReference type="SUPFAM" id="SSF111369">
    <property type="entry name" value="HlyD-like secretion proteins"/>
    <property type="match status" value="1"/>
</dbReference>
<feature type="chain" id="PRO_0000201871" description="Probable multidrug resistance protein EmrK">
    <location>
        <begin position="1"/>
        <end position="387"/>
    </location>
</feature>
<feature type="topological domain" description="Cytoplasmic" evidence="2">
    <location>
        <begin position="1"/>
        <end position="16"/>
    </location>
</feature>
<feature type="transmembrane region" description="Helical" evidence="2">
    <location>
        <begin position="17"/>
        <end position="37"/>
    </location>
</feature>
<feature type="topological domain" description="Periplasmic" evidence="2">
    <location>
        <begin position="38"/>
        <end position="387"/>
    </location>
</feature>
<reference key="1">
    <citation type="submission" date="1995-11" db="EMBL/GenBank/DDBJ databases">
        <title>Analysis and characterization of the upstream region of evgA and evgS.</title>
        <authorList>
            <person name="Utsumi R."/>
        </authorList>
    </citation>
    <scope>NUCLEOTIDE SEQUENCE [GENOMIC DNA]</scope>
</reference>
<reference key="2">
    <citation type="journal article" date="1997" name="DNA Res.">
        <title>Construction of a contiguous 874-kb sequence of the Escherichia coli-K12 genome corresponding to 50.0-68.8 min on the linkage map and analysis of its sequence features.</title>
        <authorList>
            <person name="Yamamoto Y."/>
            <person name="Aiba H."/>
            <person name="Baba T."/>
            <person name="Hayashi K."/>
            <person name="Inada T."/>
            <person name="Isono K."/>
            <person name="Itoh T."/>
            <person name="Kimura S."/>
            <person name="Kitagawa M."/>
            <person name="Makino K."/>
            <person name="Miki T."/>
            <person name="Mitsuhashi N."/>
            <person name="Mizobuchi K."/>
            <person name="Mori H."/>
            <person name="Nakade S."/>
            <person name="Nakamura Y."/>
            <person name="Nashimoto H."/>
            <person name="Oshima T."/>
            <person name="Oyama S."/>
            <person name="Saito N."/>
            <person name="Sampei G."/>
            <person name="Satoh Y."/>
            <person name="Sivasundaram S."/>
            <person name="Tagami H."/>
            <person name="Takahashi H."/>
            <person name="Takeda J."/>
            <person name="Takemoto K."/>
            <person name="Uehara K."/>
            <person name="Wada C."/>
            <person name="Yamagata S."/>
            <person name="Horiuchi T."/>
        </authorList>
    </citation>
    <scope>NUCLEOTIDE SEQUENCE [LARGE SCALE GENOMIC DNA]</scope>
    <source>
        <strain>K12 / W3110 / ATCC 27325 / DSM 5911</strain>
    </source>
</reference>
<reference key="3">
    <citation type="journal article" date="1997" name="Science">
        <title>The complete genome sequence of Escherichia coli K-12.</title>
        <authorList>
            <person name="Blattner F.R."/>
            <person name="Plunkett G. III"/>
            <person name="Bloch C.A."/>
            <person name="Perna N.T."/>
            <person name="Burland V."/>
            <person name="Riley M."/>
            <person name="Collado-Vides J."/>
            <person name="Glasner J.D."/>
            <person name="Rode C.K."/>
            <person name="Mayhew G.F."/>
            <person name="Gregor J."/>
            <person name="Davis N.W."/>
            <person name="Kirkpatrick H.A."/>
            <person name="Goeden M.A."/>
            <person name="Rose D.J."/>
            <person name="Mau B."/>
            <person name="Shao Y."/>
        </authorList>
    </citation>
    <scope>NUCLEOTIDE SEQUENCE [LARGE SCALE GENOMIC DNA]</scope>
    <source>
        <strain>K12 / MG1655 / ATCC 47076</strain>
    </source>
</reference>
<reference key="4">
    <citation type="journal article" date="2006" name="Mol. Syst. Biol.">
        <title>Highly accurate genome sequences of Escherichia coli K-12 strains MG1655 and W3110.</title>
        <authorList>
            <person name="Hayashi K."/>
            <person name="Morooka N."/>
            <person name="Yamamoto Y."/>
            <person name="Fujita K."/>
            <person name="Isono K."/>
            <person name="Choi S."/>
            <person name="Ohtsubo E."/>
            <person name="Baba T."/>
            <person name="Wanner B.L."/>
            <person name="Mori H."/>
            <person name="Horiuchi T."/>
        </authorList>
    </citation>
    <scope>NUCLEOTIDE SEQUENCE [LARGE SCALE GENOMIC DNA]</scope>
    <source>
        <strain>K12 / W3110 / ATCC 27325 / DSM 5911</strain>
    </source>
</reference>
<reference key="5">
    <citation type="journal article" date="1997" name="J. Gen. Appl. Microbiol.">
        <title>Growth phase-dependent transcription of emrKY, a homolog of multidrug efflux emrAB genes of Escherichia coli, is induced by tetracycline.</title>
        <authorList>
            <person name="Tanabe H."/>
            <person name="Yamasak K."/>
            <person name="Furue M."/>
            <person name="Yamamoto K."/>
            <person name="Katoh A."/>
            <person name="Yamamoto M."/>
            <person name="Yoshioka S."/>
            <person name="Tagami H."/>
            <person name="Aiba H.A."/>
            <person name="Utsumi R."/>
        </authorList>
    </citation>
    <scope>INDUCTION</scope>
    <source>
        <strain>K12 / MC4100 / ATCC 35695 / DSM 6574</strain>
    </source>
</reference>
<reference key="6">
    <citation type="journal article" date="2010" name="BMC Microbiol.">
        <title>Escherichia coli genes that reduce the lethal effects of stress.</title>
        <authorList>
            <person name="Han X."/>
            <person name="Dorsey-Oresto A."/>
            <person name="Malik M."/>
            <person name="Wang J.Y."/>
            <person name="Drlica K."/>
            <person name="Zhao X."/>
            <person name="Lu T."/>
        </authorList>
    </citation>
    <scope>DISRUPTION PHENOTYPE</scope>
    <source>
        <strain>K12</strain>
    </source>
</reference>
<organism>
    <name type="scientific">Escherichia coli (strain K12)</name>
    <dbReference type="NCBI Taxonomy" id="83333"/>
    <lineage>
        <taxon>Bacteria</taxon>
        <taxon>Pseudomonadati</taxon>
        <taxon>Pseudomonadota</taxon>
        <taxon>Gammaproteobacteria</taxon>
        <taxon>Enterobacterales</taxon>
        <taxon>Enterobacteriaceae</taxon>
        <taxon>Escherichia</taxon>
    </lineage>
</organism>
<evidence type="ECO:0000250" key="1"/>
<evidence type="ECO:0000255" key="2"/>
<evidence type="ECO:0000269" key="3">
    <source>
    </source>
</evidence>
<evidence type="ECO:0000269" key="4">
    <source>
    </source>
</evidence>
<evidence type="ECO:0000305" key="5"/>
<sequence>MEQINSNKKHSNRRKYFSLLAVVLFIAFSGAYAYWSMELEDMISTDDAYVTGNADPISAQVSGSVTVVNHKDTNYVRQGDILVSLDKTDATIALNKAKNNLANIVRQTNKLYLQDKQYSAEVASARIQYQQSLEDYNRRVPLAKQGVISKETLEHTKDTLISSKAALNAAIQAYKANKALVMNTPLNRQPQVVEAADATKEAWLALKRTDIKSPVTGYIAQRSVQVGETVSPGQSLMAVVPARQMWVNANFKETQLTDVRIGQSVNIISDLYGENVVFHGRVTGINMGTGNAFSLLPAQNATGNWIKIVQRVPVEVSLDPKELMEHPLRIGLSMTATIDTKNEDIAEMPELASTVTSMPAYTSKALVIDTSPIEKEISNIISHNGQL</sequence>
<protein>
    <recommendedName>
        <fullName>Probable multidrug resistance protein EmrK</fullName>
    </recommendedName>
</protein>
<name>EMRK_ECOLI</name>
<gene>
    <name type="primary">emrK</name>
    <name type="ordered locus">b2368</name>
    <name type="ordered locus">JW2365</name>
</gene>
<comment type="function">
    <text evidence="1">Part of the tripartite efflux system EmrYK-TolC, which confers resistance to various drugs.</text>
</comment>
<comment type="subunit">
    <text evidence="1">Part of the tripartite efflux system EmrYK-TolC, which is composed of an inner membrane transporter, EmrY, a membrane fusion protein, EmrK, and an outer membrane component, TolC. The complex forms a large protein conduit and can translocate molecules across both the inner and outer membranes (By similarity).</text>
</comment>
<comment type="subcellular location">
    <subcellularLocation>
        <location evidence="5">Cell inner membrane</location>
        <topology evidence="5">Single-pass membrane protein</topology>
        <orientation evidence="5">Periplasmic side</orientation>
    </subcellularLocation>
</comment>
<comment type="induction">
    <text evidence="3">Growth phase-dependent transcription is induced by tetracycline. Expression may be controlled by both RpoS and the Mar system.</text>
</comment>
<comment type="disruption phenotype">
    <text evidence="4">Mutants are more sensitive to nalidixic acid, mitomycin C and other stresses such as hydrogen peroxide or UV irradiation.</text>
</comment>
<comment type="similarity">
    <text evidence="5">Belongs to the membrane fusion protein (MFP) (TC 8.A.1) family.</text>
</comment>
<comment type="sequence caution" evidence="5">
    <conflict type="erroneous initiation">
        <sequence resource="EMBL-CDS" id="BAA11236"/>
    </conflict>
    <text>Truncated N-terminus.</text>
</comment>